<accession>P41431</accession>
<sequence>MDDSVASMCVDNAFAYTTDDLLKNIPFSHSKCAPFKLQNYTVLKRLSNGFIDKYVDVCSISELQKFNFKIDRLTNYISNIFEYEFVVLEHDLSTVHVINAETKTKLGHINVSLNQNDANVLILTVTLTS</sequence>
<protein>
    <recommendedName>
        <fullName>Uncharacterized 14.6 kDa protein in EGT-IAP1 intergenic region</fullName>
    </recommendedName>
</protein>
<keyword id="KW-1185">Reference proteome</keyword>
<organismHost>
    <name type="scientific">Lepidoptera</name>
    <name type="common">butterflies and moths</name>
    <dbReference type="NCBI Taxonomy" id="7088"/>
</organismHost>
<name>Y026_NPVAC</name>
<organism>
    <name type="scientific">Autographa californica nuclear polyhedrosis virus</name>
    <name type="common">AcMNPV</name>
    <dbReference type="NCBI Taxonomy" id="46015"/>
    <lineage>
        <taxon>Viruses</taxon>
        <taxon>Viruses incertae sedis</taxon>
        <taxon>Naldaviricetes</taxon>
        <taxon>Lefavirales</taxon>
        <taxon>Baculoviridae</taxon>
        <taxon>Alphabaculovirus</taxon>
        <taxon>Alphabaculovirus aucalifornicae</taxon>
    </lineage>
</organism>
<feature type="chain" id="PRO_0000132964" description="Uncharacterized 14.6 kDa protein in EGT-IAP1 intergenic region">
    <location>
        <begin position="1"/>
        <end position="129"/>
    </location>
</feature>
<dbReference type="EMBL" id="L22858">
    <property type="protein sequence ID" value="AAA66656.1"/>
    <property type="molecule type" value="Genomic_DNA"/>
</dbReference>
<dbReference type="PIR" id="B72853">
    <property type="entry name" value="B72853"/>
</dbReference>
<dbReference type="RefSeq" id="NP_054055.1">
    <property type="nucleotide sequence ID" value="NC_001623.1"/>
</dbReference>
<dbReference type="SMR" id="P41431"/>
<dbReference type="GeneID" id="1403858"/>
<dbReference type="KEGG" id="vg:1403858"/>
<dbReference type="OrthoDB" id="15991at10239"/>
<dbReference type="Proteomes" id="UP000008292">
    <property type="component" value="Segment"/>
</dbReference>
<dbReference type="InterPro" id="IPR007355">
    <property type="entry name" value="DUF424"/>
</dbReference>
<dbReference type="Pfam" id="PF04242">
    <property type="entry name" value="DUF424"/>
    <property type="match status" value="1"/>
</dbReference>
<proteinExistence type="predicted"/>
<reference key="1">
    <citation type="journal article" date="1994" name="Virology">
        <title>The complete DNA sequence of Autographa californica nuclear polyhedrosis virus.</title>
        <authorList>
            <person name="Ayres M.D."/>
            <person name="Howard S.C."/>
            <person name="Kuzio J."/>
            <person name="Lopez-Ferber M."/>
            <person name="Possee R.D."/>
        </authorList>
    </citation>
    <scope>NUCLEOTIDE SEQUENCE [LARGE SCALE GENOMIC DNA]</scope>
    <source>
        <strain>C6</strain>
    </source>
</reference>